<name>RS12_STRCO</name>
<keyword id="KW-0046">Antibiotic resistance</keyword>
<keyword id="KW-0488">Methylation</keyword>
<keyword id="KW-1185">Reference proteome</keyword>
<keyword id="KW-0687">Ribonucleoprotein</keyword>
<keyword id="KW-0689">Ribosomal protein</keyword>
<keyword id="KW-0694">RNA-binding</keyword>
<keyword id="KW-0699">rRNA-binding</keyword>
<keyword id="KW-0820">tRNA-binding</keyword>
<evidence type="ECO:0000250" key="1"/>
<evidence type="ECO:0000256" key="2">
    <source>
        <dbReference type="SAM" id="MobiDB-lite"/>
    </source>
</evidence>
<evidence type="ECO:0000269" key="3">
    <source>
    </source>
</evidence>
<evidence type="ECO:0000305" key="4"/>
<gene>
    <name type="primary">rpsL</name>
    <name type="ordered locus">SCO4659</name>
    <name type="ORF">SCD40A.05</name>
</gene>
<accession>P0A4A3</accession>
<accession>P97222</accession>
<dbReference type="EMBL" id="AL939121">
    <property type="protein sequence ID" value="CAB81850.1"/>
    <property type="molecule type" value="Genomic_DNA"/>
</dbReference>
<dbReference type="RefSeq" id="NP_628819.1">
    <property type="nucleotide sequence ID" value="NC_003888.3"/>
</dbReference>
<dbReference type="RefSeq" id="WP_003948652.1">
    <property type="nucleotide sequence ID" value="NZ_VNID01000028.1"/>
</dbReference>
<dbReference type="SMR" id="P0A4A3"/>
<dbReference type="FunCoup" id="P0A4A3">
    <property type="interactions" value="344"/>
</dbReference>
<dbReference type="STRING" id="100226.gene:17762308"/>
<dbReference type="ChEMBL" id="CHEMBL1641336"/>
<dbReference type="PaxDb" id="100226-SCO4659"/>
<dbReference type="GeneID" id="97760361"/>
<dbReference type="KEGG" id="sco:SCO4659"/>
<dbReference type="PATRIC" id="fig|100226.15.peg.4730"/>
<dbReference type="eggNOG" id="COG0048">
    <property type="taxonomic scope" value="Bacteria"/>
</dbReference>
<dbReference type="HOGENOM" id="CLU_104295_1_2_11"/>
<dbReference type="InParanoid" id="P0A4A3"/>
<dbReference type="OrthoDB" id="9802366at2"/>
<dbReference type="PhylomeDB" id="P0A4A3"/>
<dbReference type="PRO" id="PR:P0A4A3"/>
<dbReference type="Proteomes" id="UP000001973">
    <property type="component" value="Chromosome"/>
</dbReference>
<dbReference type="GO" id="GO:0005840">
    <property type="term" value="C:ribosome"/>
    <property type="evidence" value="ECO:0000318"/>
    <property type="project" value="GO_Central"/>
</dbReference>
<dbReference type="GO" id="GO:0015935">
    <property type="term" value="C:small ribosomal subunit"/>
    <property type="evidence" value="ECO:0007669"/>
    <property type="project" value="InterPro"/>
</dbReference>
<dbReference type="GO" id="GO:0019843">
    <property type="term" value="F:rRNA binding"/>
    <property type="evidence" value="ECO:0007669"/>
    <property type="project" value="UniProtKB-UniRule"/>
</dbReference>
<dbReference type="GO" id="GO:0003735">
    <property type="term" value="F:structural constituent of ribosome"/>
    <property type="evidence" value="ECO:0000318"/>
    <property type="project" value="GO_Central"/>
</dbReference>
<dbReference type="GO" id="GO:0000049">
    <property type="term" value="F:tRNA binding"/>
    <property type="evidence" value="ECO:0007669"/>
    <property type="project" value="UniProtKB-UniRule"/>
</dbReference>
<dbReference type="GO" id="GO:0046677">
    <property type="term" value="P:response to antibiotic"/>
    <property type="evidence" value="ECO:0007669"/>
    <property type="project" value="UniProtKB-KW"/>
</dbReference>
<dbReference type="GO" id="GO:0006412">
    <property type="term" value="P:translation"/>
    <property type="evidence" value="ECO:0000318"/>
    <property type="project" value="GO_Central"/>
</dbReference>
<dbReference type="CDD" id="cd03368">
    <property type="entry name" value="Ribosomal_S12"/>
    <property type="match status" value="1"/>
</dbReference>
<dbReference type="FunFam" id="2.40.50.140:FF:000001">
    <property type="entry name" value="30S ribosomal protein S12"/>
    <property type="match status" value="1"/>
</dbReference>
<dbReference type="Gene3D" id="2.40.50.140">
    <property type="entry name" value="Nucleic acid-binding proteins"/>
    <property type="match status" value="1"/>
</dbReference>
<dbReference type="HAMAP" id="MF_00403_B">
    <property type="entry name" value="Ribosomal_uS12_B"/>
    <property type="match status" value="1"/>
</dbReference>
<dbReference type="InterPro" id="IPR012340">
    <property type="entry name" value="NA-bd_OB-fold"/>
</dbReference>
<dbReference type="InterPro" id="IPR006032">
    <property type="entry name" value="Ribosomal_uS12"/>
</dbReference>
<dbReference type="InterPro" id="IPR005679">
    <property type="entry name" value="Ribosomal_uS12_bac"/>
</dbReference>
<dbReference type="NCBIfam" id="TIGR00981">
    <property type="entry name" value="rpsL_bact"/>
    <property type="match status" value="1"/>
</dbReference>
<dbReference type="PANTHER" id="PTHR11652">
    <property type="entry name" value="30S RIBOSOMAL PROTEIN S12 FAMILY MEMBER"/>
    <property type="match status" value="1"/>
</dbReference>
<dbReference type="Pfam" id="PF00164">
    <property type="entry name" value="Ribosom_S12_S23"/>
    <property type="match status" value="1"/>
</dbReference>
<dbReference type="PIRSF" id="PIRSF002133">
    <property type="entry name" value="Ribosomal_S12/S23"/>
    <property type="match status" value="1"/>
</dbReference>
<dbReference type="PRINTS" id="PR01034">
    <property type="entry name" value="RIBOSOMALS12"/>
</dbReference>
<dbReference type="SUPFAM" id="SSF50249">
    <property type="entry name" value="Nucleic acid-binding proteins"/>
    <property type="match status" value="1"/>
</dbReference>
<dbReference type="PROSITE" id="PS00055">
    <property type="entry name" value="RIBOSOMAL_S12"/>
    <property type="match status" value="1"/>
</dbReference>
<comment type="function">
    <text evidence="1">With S4 and S5 plays an important role in translational accuracy.</text>
</comment>
<comment type="function">
    <text evidence="1">Interacts with and stabilizes bases of the 16S rRNA that are involved in tRNA selection in the A site and with the mRNA backbone. Located at the interface of the 30S and 50S subunits, it traverses the body of the 30S subunit contacting proteins on the other side and probably holding the rRNA structure together. The combined cluster of proteins S8, S12 and S17 appears to hold together the shoulder and platform of the 30S subunit (By similarity).</text>
</comment>
<comment type="subunit">
    <text evidence="1">Part of the 30S ribosomal subunit. Contacts proteins S8 and S17. May interact with IF1 in the 30S initiation complex (By similarity).</text>
</comment>
<comment type="biotechnology">
    <text>One streptomycin resistant strain of S.coelicolor and S.lividans (K88E) produces increased quantities of the natural antibiotic actinorhodin; strains which are resistant to multiple drugs produce more antibiotic.</text>
</comment>
<comment type="similarity">
    <text evidence="4">Belongs to the universal ribosomal protein uS12 family.</text>
</comment>
<organism>
    <name type="scientific">Streptomyces coelicolor (strain ATCC BAA-471 / A3(2) / M145)</name>
    <dbReference type="NCBI Taxonomy" id="100226"/>
    <lineage>
        <taxon>Bacteria</taxon>
        <taxon>Bacillati</taxon>
        <taxon>Actinomycetota</taxon>
        <taxon>Actinomycetes</taxon>
        <taxon>Kitasatosporales</taxon>
        <taxon>Streptomycetaceae</taxon>
        <taxon>Streptomyces</taxon>
        <taxon>Streptomyces albidoflavus group</taxon>
    </lineage>
</organism>
<reference key="1">
    <citation type="journal article" date="1996" name="J. Bacteriol.">
        <title>Induction of actinorhodin production by rpsL (encoding ribosomal protein S12) mutations that confer streptomycin resistance in Streptomyces lividans and Streptomyces coelicolor A3(2).</title>
        <authorList>
            <person name="Shima J."/>
            <person name="Hesketh A."/>
            <person name="Okamoto S."/>
            <person name="Kawamoto S."/>
            <person name="Ochi K."/>
        </authorList>
    </citation>
    <scope>NUCLEOTIDE SEQUENCE [GENOMIC DNA]</scope>
    <scope>VARIANTS ASN-43; HIS-86 AND GLU-88</scope>
    <source>
        <strain>A3(2) / 1147</strain>
    </source>
</reference>
<reference key="2">
    <citation type="journal article" date="2002" name="Nature">
        <title>Complete genome sequence of the model actinomycete Streptomyces coelicolor A3(2).</title>
        <authorList>
            <person name="Bentley S.D."/>
            <person name="Chater K.F."/>
            <person name="Cerdeno-Tarraga A.-M."/>
            <person name="Challis G.L."/>
            <person name="Thomson N.R."/>
            <person name="James K.D."/>
            <person name="Harris D.E."/>
            <person name="Quail M.A."/>
            <person name="Kieser H."/>
            <person name="Harper D."/>
            <person name="Bateman A."/>
            <person name="Brown S."/>
            <person name="Chandra G."/>
            <person name="Chen C.W."/>
            <person name="Collins M."/>
            <person name="Cronin A."/>
            <person name="Fraser A."/>
            <person name="Goble A."/>
            <person name="Hidalgo J."/>
            <person name="Hornsby T."/>
            <person name="Howarth S."/>
            <person name="Huang C.-H."/>
            <person name="Kieser T."/>
            <person name="Larke L."/>
            <person name="Murphy L.D."/>
            <person name="Oliver K."/>
            <person name="O'Neil S."/>
            <person name="Rabbinowitsch E."/>
            <person name="Rajandream M.A."/>
            <person name="Rutherford K.M."/>
            <person name="Rutter S."/>
            <person name="Seeger K."/>
            <person name="Saunders D."/>
            <person name="Sharp S."/>
            <person name="Squares R."/>
            <person name="Squares S."/>
            <person name="Taylor K."/>
            <person name="Warren T."/>
            <person name="Wietzorrek A."/>
            <person name="Woodward J.R."/>
            <person name="Barrell B.G."/>
            <person name="Parkhill J."/>
            <person name="Hopwood D.A."/>
        </authorList>
    </citation>
    <scope>NUCLEOTIDE SEQUENCE [LARGE SCALE GENOMIC DNA]</scope>
    <source>
        <strain>ATCC BAA-471 / A3(2) / M145</strain>
    </source>
</reference>
<reference key="3">
    <citation type="journal article" date="2001" name="Appl. Environ. Microbiol.">
        <title>Novel approach for improving the productivity of antibiotic-producing strains by inducing combined resistant mutations.</title>
        <authorList>
            <person name="Hu H."/>
            <person name="Ochi K."/>
        </authorList>
    </citation>
    <scope>STREPTOMYCIN RESISTANT STRAIN</scope>
    <scope>ANTIBIOTIC PRODUCTION</scope>
    <source>
        <strain>A3(2) / 1147</strain>
    </source>
</reference>
<sequence length="123" mass="13771">MPTIQQLVRKGRQDKVEKNKTPALEGSPQRRGVCTRVFTTTPKKPNSALRKVARVRLTSGIEVTAYIPGEGHNLQEHSIVLVRGGRVKDLPGVRYKIIRGSLDTQGVKNRKQARSRYGAKKEK</sequence>
<protein>
    <recommendedName>
        <fullName evidence="4">Small ribosomal subunit protein uS12</fullName>
    </recommendedName>
    <alternativeName>
        <fullName>30S ribosomal protein S12</fullName>
    </alternativeName>
</protein>
<proteinExistence type="evidence at protein level"/>
<feature type="chain" id="PRO_0000146320" description="Small ribosomal subunit protein uS12">
    <location>
        <begin position="1"/>
        <end position="123"/>
    </location>
</feature>
<feature type="region of interest" description="Disordered" evidence="2">
    <location>
        <begin position="1"/>
        <end position="30"/>
    </location>
</feature>
<feature type="compositionally biased region" description="Basic and acidic residues" evidence="2">
    <location>
        <begin position="11"/>
        <end position="20"/>
    </location>
</feature>
<feature type="modified residue" description="3-methylthioaspartic acid" evidence="1">
    <location>
        <position position="89"/>
    </location>
</feature>
<feature type="sequence variant" description="In strain: STRA1; streptomycin resistant mutant which does not increase antibiotic production." evidence="3">
    <original>K</original>
    <variation>N</variation>
    <location>
        <position position="43"/>
    </location>
</feature>
<feature type="sequence variant" description="In strain: KO-150 and KO-151; low level streptomycin resistant mutants which increase antibiotic production." evidence="3">
    <original>R</original>
    <variation>H</variation>
    <location>
        <position position="86"/>
    </location>
</feature>
<feature type="sequence variant" description="Streptomycin resistant mutant. Increases antibiotic production." evidence="3">
    <original>K</original>
    <variation>E</variation>
    <location>
        <position position="88"/>
    </location>
</feature>